<accession>Q5R5Z8</accession>
<evidence type="ECO:0000250" key="1"/>
<evidence type="ECO:0000255" key="2"/>
<evidence type="ECO:0000305" key="3"/>
<protein>
    <recommendedName>
        <fullName>Secretory carrier-associated membrane protein 5</fullName>
        <shortName>Secretory carrier membrane protein 5</shortName>
    </recommendedName>
</protein>
<organism>
    <name type="scientific">Pongo abelii</name>
    <name type="common">Sumatran orangutan</name>
    <name type="synonym">Pongo pygmaeus abelii</name>
    <dbReference type="NCBI Taxonomy" id="9601"/>
    <lineage>
        <taxon>Eukaryota</taxon>
        <taxon>Metazoa</taxon>
        <taxon>Chordata</taxon>
        <taxon>Craniata</taxon>
        <taxon>Vertebrata</taxon>
        <taxon>Euteleostomi</taxon>
        <taxon>Mammalia</taxon>
        <taxon>Eutheria</taxon>
        <taxon>Euarchontoglires</taxon>
        <taxon>Primates</taxon>
        <taxon>Haplorrhini</taxon>
        <taxon>Catarrhini</taxon>
        <taxon>Hominidae</taxon>
        <taxon>Pongo</taxon>
    </lineage>
</organism>
<name>SCAM5_PONAB</name>
<feature type="chain" id="PRO_0000370553" description="Secretory carrier-associated membrane protein 5">
    <location>
        <begin position="1"/>
        <end position="235"/>
    </location>
</feature>
<feature type="topological domain" description="Cytoplasmic" evidence="2">
    <location>
        <begin position="1"/>
        <end position="39"/>
    </location>
</feature>
<feature type="transmembrane region" description="Helical" evidence="2">
    <location>
        <begin position="40"/>
        <end position="60"/>
    </location>
</feature>
<feature type="topological domain" description="Extracellular" evidence="2">
    <location>
        <begin position="61"/>
        <end position="67"/>
    </location>
</feature>
<feature type="transmembrane region" description="Helical" evidence="2">
    <location>
        <begin position="68"/>
        <end position="88"/>
    </location>
</feature>
<feature type="topological domain" description="Cytoplasmic" evidence="2">
    <location>
        <begin position="89"/>
        <end position="102"/>
    </location>
</feature>
<feature type="transmembrane region" description="Helical" evidence="2">
    <location>
        <begin position="103"/>
        <end position="125"/>
    </location>
</feature>
<feature type="topological domain" description="Extracellular" evidence="2">
    <location>
        <begin position="126"/>
        <end position="148"/>
    </location>
</feature>
<feature type="transmembrane region" description="Helical" evidence="2">
    <location>
        <begin position="149"/>
        <end position="169"/>
    </location>
</feature>
<feature type="topological domain" description="Cytoplasmic" evidence="2">
    <location>
        <begin position="170"/>
        <end position="235"/>
    </location>
</feature>
<keyword id="KW-1003">Cell membrane</keyword>
<keyword id="KW-0968">Cytoplasmic vesicle</keyword>
<keyword id="KW-0967">Endosome</keyword>
<keyword id="KW-0268">Exocytosis</keyword>
<keyword id="KW-0333">Golgi apparatus</keyword>
<keyword id="KW-0472">Membrane</keyword>
<keyword id="KW-0653">Protein transport</keyword>
<keyword id="KW-1185">Reference proteome</keyword>
<keyword id="KW-0770">Synapse</keyword>
<keyword id="KW-0812">Transmembrane</keyword>
<keyword id="KW-1133">Transmembrane helix</keyword>
<keyword id="KW-0813">Transport</keyword>
<sequence length="235" mass="26057">MAEKVNNFPPLPKFIPLKPCFYQDFEADIPPQHLSMTKRLYYLWMLNSVTLAVNLVGCLAWLIGGGGATNFGLAFLWLILFTPCSYVCWFRPIYKAFKTDSSFSFMAFFFTFMAQLVISIIQAVGIPGWGVCGWIATISFFGTSIGSAVVMLIPTVMFTVMAVFSFIALSMVHKFYRGSGGSLSKAQEEWTTGAWKNPHVQQAAQNAAMGAAQGAMNQPQTQYSATPNYTYSNEM</sequence>
<dbReference type="EMBL" id="CR860702">
    <property type="protein sequence ID" value="CAH92818.1"/>
    <property type="molecule type" value="mRNA"/>
</dbReference>
<dbReference type="RefSeq" id="NP_001126646.1">
    <property type="nucleotide sequence ID" value="NM_001133174.1"/>
</dbReference>
<dbReference type="SMR" id="Q5R5Z8"/>
<dbReference type="FunCoup" id="Q5R5Z8">
    <property type="interactions" value="467"/>
</dbReference>
<dbReference type="STRING" id="9601.ENSPPYP00000007548"/>
<dbReference type="GeneID" id="100173644"/>
<dbReference type="KEGG" id="pon:100173644"/>
<dbReference type="CTD" id="192683"/>
<dbReference type="eggNOG" id="KOG3088">
    <property type="taxonomic scope" value="Eukaryota"/>
</dbReference>
<dbReference type="InParanoid" id="Q5R5Z8"/>
<dbReference type="OrthoDB" id="242866at2759"/>
<dbReference type="Proteomes" id="UP000001595">
    <property type="component" value="Unplaced"/>
</dbReference>
<dbReference type="GO" id="GO:0000139">
    <property type="term" value="C:Golgi membrane"/>
    <property type="evidence" value="ECO:0000250"/>
    <property type="project" value="UniProtKB"/>
</dbReference>
<dbReference type="GO" id="GO:0005886">
    <property type="term" value="C:plasma membrane"/>
    <property type="evidence" value="ECO:0000250"/>
    <property type="project" value="UniProtKB"/>
</dbReference>
<dbReference type="GO" id="GO:0055038">
    <property type="term" value="C:recycling endosome membrane"/>
    <property type="evidence" value="ECO:0007669"/>
    <property type="project" value="UniProtKB-SubCell"/>
</dbReference>
<dbReference type="GO" id="GO:0030672">
    <property type="term" value="C:synaptic vesicle membrane"/>
    <property type="evidence" value="ECO:0007669"/>
    <property type="project" value="UniProtKB-SubCell"/>
</dbReference>
<dbReference type="GO" id="GO:0032588">
    <property type="term" value="C:trans-Golgi network membrane"/>
    <property type="evidence" value="ECO:0007669"/>
    <property type="project" value="TreeGrafter"/>
</dbReference>
<dbReference type="GO" id="GO:0006887">
    <property type="term" value="P:exocytosis"/>
    <property type="evidence" value="ECO:0007669"/>
    <property type="project" value="UniProtKB-KW"/>
</dbReference>
<dbReference type="GO" id="GO:0045956">
    <property type="term" value="P:positive regulation of calcium ion-dependent exocytosis"/>
    <property type="evidence" value="ECO:0000250"/>
    <property type="project" value="UniProtKB"/>
</dbReference>
<dbReference type="GO" id="GO:0001819">
    <property type="term" value="P:positive regulation of cytokine production"/>
    <property type="evidence" value="ECO:0000250"/>
    <property type="project" value="UniProtKB"/>
</dbReference>
<dbReference type="GO" id="GO:0015031">
    <property type="term" value="P:protein transport"/>
    <property type="evidence" value="ECO:0007669"/>
    <property type="project" value="UniProtKB-KW"/>
</dbReference>
<dbReference type="InterPro" id="IPR007273">
    <property type="entry name" value="SCAMP"/>
</dbReference>
<dbReference type="PANTHER" id="PTHR10687:SF5">
    <property type="entry name" value="SECRETORY CARRIER-ASSOCIATED MEMBRANE PROTEIN 5"/>
    <property type="match status" value="1"/>
</dbReference>
<dbReference type="PANTHER" id="PTHR10687">
    <property type="entry name" value="SECRETORY CARRIER-ASSOCIATED MEMBRANE PROTEIN SCAMP"/>
    <property type="match status" value="1"/>
</dbReference>
<dbReference type="Pfam" id="PF04144">
    <property type="entry name" value="SCAMP"/>
    <property type="match status" value="1"/>
</dbReference>
<comment type="function">
    <text evidence="1">Required for the calcium-dependent exocytosis of signal sequence-containing cytokines such as CCL5. Probably acts in cooperation with the SNARE machinery (By similarity).</text>
</comment>
<comment type="subunit">
    <text evidence="1">Interacts (via C-terminal part) with SYT1 and SYT2; interaction with synaptotagmins making a link with the SNARE molecules. Interacts with SLC9A7 (By similarity).</text>
</comment>
<comment type="subcellular location">
    <subcellularLocation>
        <location evidence="1">Cell membrane</location>
        <topology evidence="1">Multi-pass membrane protein</topology>
    </subcellularLocation>
    <subcellularLocation>
        <location evidence="1">Golgi apparatus membrane</location>
        <topology evidence="1">Multi-pass membrane protein</topology>
    </subcellularLocation>
    <subcellularLocation>
        <location evidence="1">Golgi apparatus</location>
        <location evidence="1">trans-Golgi network membrane</location>
        <topology evidence="1">Multi-pass membrane protein</topology>
    </subcellularLocation>
    <subcellularLocation>
        <location evidence="1">Recycling endosome membrane</location>
        <topology evidence="1">Multi-pass membrane protein</topology>
    </subcellularLocation>
    <subcellularLocation>
        <location evidence="1">Cytoplasmic vesicle</location>
        <location evidence="1">Secretory vesicle</location>
        <location evidence="1">Synaptic vesicle membrane</location>
        <topology evidence="1">Multi-pass membrane protein</topology>
    </subcellularLocation>
    <text evidence="1">Mainly localizes in Golgi apparatus membrane. Upon calcium-triggered exocytosis, it translocates to the cell membrane. Highly enriched in synaptic vesicles (By similarity).</text>
</comment>
<comment type="similarity">
    <text evidence="3">Belongs to the SCAMP family. SCAMP5 subfamily.</text>
</comment>
<reference key="1">
    <citation type="submission" date="2004-11" db="EMBL/GenBank/DDBJ databases">
        <authorList>
            <consortium name="The German cDNA consortium"/>
        </authorList>
    </citation>
    <scope>NUCLEOTIDE SEQUENCE [LARGE SCALE MRNA]</scope>
    <source>
        <tissue>Brain cortex</tissue>
    </source>
</reference>
<proteinExistence type="evidence at transcript level"/>
<gene>
    <name type="primary">SCAMP5</name>
</gene>